<gene>
    <name evidence="1" type="primary">rnt</name>
    <name type="ordered locus">UTI89_C1843</name>
</gene>
<accession>Q1RBE3</accession>
<dbReference type="EC" id="3.1.13.-" evidence="1"/>
<dbReference type="EMBL" id="CP000243">
    <property type="protein sequence ID" value="ABE07321.1"/>
    <property type="molecule type" value="Genomic_DNA"/>
</dbReference>
<dbReference type="RefSeq" id="WP_001282281.1">
    <property type="nucleotide sequence ID" value="NZ_CP064825.1"/>
</dbReference>
<dbReference type="SMR" id="Q1RBE3"/>
<dbReference type="GeneID" id="93775806"/>
<dbReference type="KEGG" id="eci:UTI89_C1843"/>
<dbReference type="HOGENOM" id="CLU_082724_0_0_6"/>
<dbReference type="Proteomes" id="UP000001952">
    <property type="component" value="Chromosome"/>
</dbReference>
<dbReference type="GO" id="GO:0005829">
    <property type="term" value="C:cytosol"/>
    <property type="evidence" value="ECO:0007669"/>
    <property type="project" value="TreeGrafter"/>
</dbReference>
<dbReference type="GO" id="GO:0008408">
    <property type="term" value="F:3'-5' exonuclease activity"/>
    <property type="evidence" value="ECO:0007669"/>
    <property type="project" value="TreeGrafter"/>
</dbReference>
<dbReference type="GO" id="GO:0000287">
    <property type="term" value="F:magnesium ion binding"/>
    <property type="evidence" value="ECO:0007669"/>
    <property type="project" value="UniProtKB-UniRule"/>
</dbReference>
<dbReference type="GO" id="GO:0003676">
    <property type="term" value="F:nucleic acid binding"/>
    <property type="evidence" value="ECO:0007669"/>
    <property type="project" value="InterPro"/>
</dbReference>
<dbReference type="GO" id="GO:0016896">
    <property type="term" value="F:RNA exonuclease activity, producing 5'-phosphomonoesters"/>
    <property type="evidence" value="ECO:0007669"/>
    <property type="project" value="UniProtKB-UniRule"/>
</dbReference>
<dbReference type="GO" id="GO:0045004">
    <property type="term" value="P:DNA replication proofreading"/>
    <property type="evidence" value="ECO:0007669"/>
    <property type="project" value="TreeGrafter"/>
</dbReference>
<dbReference type="GO" id="GO:0008033">
    <property type="term" value="P:tRNA processing"/>
    <property type="evidence" value="ECO:0007669"/>
    <property type="project" value="UniProtKB-KW"/>
</dbReference>
<dbReference type="CDD" id="cd06134">
    <property type="entry name" value="RNaseT"/>
    <property type="match status" value="1"/>
</dbReference>
<dbReference type="FunFam" id="3.30.420.10:FF:000009">
    <property type="entry name" value="Ribonuclease T"/>
    <property type="match status" value="1"/>
</dbReference>
<dbReference type="Gene3D" id="3.30.420.10">
    <property type="entry name" value="Ribonuclease H-like superfamily/Ribonuclease H"/>
    <property type="match status" value="1"/>
</dbReference>
<dbReference type="HAMAP" id="MF_00157">
    <property type="entry name" value="RNase_T"/>
    <property type="match status" value="1"/>
</dbReference>
<dbReference type="InterPro" id="IPR013520">
    <property type="entry name" value="Exonuclease_RNaseT/DNA_pol3"/>
</dbReference>
<dbReference type="InterPro" id="IPR005987">
    <property type="entry name" value="RNase_T"/>
</dbReference>
<dbReference type="InterPro" id="IPR012337">
    <property type="entry name" value="RNaseH-like_sf"/>
</dbReference>
<dbReference type="InterPro" id="IPR036397">
    <property type="entry name" value="RNaseH_sf"/>
</dbReference>
<dbReference type="NCBIfam" id="TIGR01298">
    <property type="entry name" value="RNaseT"/>
    <property type="match status" value="1"/>
</dbReference>
<dbReference type="PANTHER" id="PTHR30231">
    <property type="entry name" value="DNA POLYMERASE III SUBUNIT EPSILON"/>
    <property type="match status" value="1"/>
</dbReference>
<dbReference type="PANTHER" id="PTHR30231:SF2">
    <property type="entry name" value="RIBONUCLEASE T"/>
    <property type="match status" value="1"/>
</dbReference>
<dbReference type="Pfam" id="PF00929">
    <property type="entry name" value="RNase_T"/>
    <property type="match status" value="1"/>
</dbReference>
<dbReference type="SMART" id="SM00479">
    <property type="entry name" value="EXOIII"/>
    <property type="match status" value="1"/>
</dbReference>
<dbReference type="SUPFAM" id="SSF53098">
    <property type="entry name" value="Ribonuclease H-like"/>
    <property type="match status" value="1"/>
</dbReference>
<reference key="1">
    <citation type="journal article" date="2006" name="Proc. Natl. Acad. Sci. U.S.A.">
        <title>Identification of genes subject to positive selection in uropathogenic strains of Escherichia coli: a comparative genomics approach.</title>
        <authorList>
            <person name="Chen S.L."/>
            <person name="Hung C.-S."/>
            <person name="Xu J."/>
            <person name="Reigstad C.S."/>
            <person name="Magrini V."/>
            <person name="Sabo A."/>
            <person name="Blasiar D."/>
            <person name="Bieri T."/>
            <person name="Meyer R.R."/>
            <person name="Ozersky P."/>
            <person name="Armstrong J.R."/>
            <person name="Fulton R.S."/>
            <person name="Latreille J.P."/>
            <person name="Spieth J."/>
            <person name="Hooton T.M."/>
            <person name="Mardis E.R."/>
            <person name="Hultgren S.J."/>
            <person name="Gordon J.I."/>
        </authorList>
    </citation>
    <scope>NUCLEOTIDE SEQUENCE [LARGE SCALE GENOMIC DNA]</scope>
    <source>
        <strain>UTI89 / UPEC</strain>
    </source>
</reference>
<feature type="chain" id="PRO_1000011392" description="Ribonuclease T">
    <location>
        <begin position="1"/>
        <end position="215"/>
    </location>
</feature>
<feature type="domain" description="Exonuclease" evidence="1">
    <location>
        <begin position="20"/>
        <end position="194"/>
    </location>
</feature>
<feature type="active site" description="Proton donor/acceptor" evidence="1">
    <location>
        <position position="181"/>
    </location>
</feature>
<feature type="binding site" evidence="1">
    <location>
        <position position="23"/>
    </location>
    <ligand>
        <name>Mg(2+)</name>
        <dbReference type="ChEBI" id="CHEBI:18420"/>
        <label>1</label>
        <note>catalytic</note>
    </ligand>
</feature>
<feature type="binding site" evidence="1">
    <location>
        <position position="23"/>
    </location>
    <ligand>
        <name>Mg(2+)</name>
        <dbReference type="ChEBI" id="CHEBI:18420"/>
        <label>2</label>
        <note>catalytic</note>
    </ligand>
</feature>
<feature type="binding site" evidence="1">
    <location>
        <position position="25"/>
    </location>
    <ligand>
        <name>Mg(2+)</name>
        <dbReference type="ChEBI" id="CHEBI:18420"/>
        <label>2</label>
        <note>catalytic</note>
    </ligand>
</feature>
<feature type="binding site" evidence="1">
    <location>
        <position position="181"/>
    </location>
    <ligand>
        <name>Mg(2+)</name>
        <dbReference type="ChEBI" id="CHEBI:18420"/>
        <label>2</label>
        <note>catalytic</note>
    </ligand>
</feature>
<feature type="binding site" evidence="1">
    <location>
        <position position="186"/>
    </location>
    <ligand>
        <name>Mg(2+)</name>
        <dbReference type="ChEBI" id="CHEBI:18420"/>
        <label>2</label>
        <note>catalytic</note>
    </ligand>
</feature>
<feature type="site" description="Important for substrate binding and specificity" evidence="1">
    <location>
        <position position="29"/>
    </location>
</feature>
<feature type="site" description="Important for substrate binding and specificity" evidence="1">
    <location>
        <position position="77"/>
    </location>
</feature>
<feature type="site" description="Important for substrate binding and specificity" evidence="1">
    <location>
        <position position="124"/>
    </location>
</feature>
<feature type="site" description="Important for substrate binding and specificity" evidence="1">
    <location>
        <position position="146"/>
    </location>
</feature>
<evidence type="ECO:0000255" key="1">
    <source>
        <dbReference type="HAMAP-Rule" id="MF_00157"/>
    </source>
</evidence>
<name>RNT_ECOUT</name>
<organism>
    <name type="scientific">Escherichia coli (strain UTI89 / UPEC)</name>
    <dbReference type="NCBI Taxonomy" id="364106"/>
    <lineage>
        <taxon>Bacteria</taxon>
        <taxon>Pseudomonadati</taxon>
        <taxon>Pseudomonadota</taxon>
        <taxon>Gammaproteobacteria</taxon>
        <taxon>Enterobacterales</taxon>
        <taxon>Enterobacteriaceae</taxon>
        <taxon>Escherichia</taxon>
    </lineage>
</organism>
<protein>
    <recommendedName>
        <fullName evidence="1">Ribonuclease T</fullName>
        <ecNumber evidence="1">3.1.13.-</ecNumber>
    </recommendedName>
    <alternativeName>
        <fullName evidence="1">Exoribonuclease T</fullName>
        <shortName evidence="1">RNase T</shortName>
    </alternativeName>
</protein>
<sequence>MSDNAQLTGLCDRFRGFYPVVIDVETAGFNAKTDALLEIAAITLKMDEQGWLMPDTTLHFHVEPFVGANLQPEALAFNGIDPNDPDRGAVSEYEALHEIFKVVRKGIKASGCNRAIMVAHNANFDHSFMMAAAERASLKRNPFHPFATFDTAALAGLALGQTVLSKACQTAGMDFDSTQAHSALYDTERTAVLFCEIVNRWKRLGGWPLPAAEEV</sequence>
<comment type="function">
    <text evidence="1">Trims short 3' overhangs of a variety of RNA species, leaving a one or two nucleotide 3' overhang. Responsible for the end-turnover of tRNA: specifically removes the terminal AMP residue from uncharged tRNA (tRNA-C-C-A). Also appears to be involved in tRNA biosynthesis.</text>
</comment>
<comment type="cofactor">
    <cofactor evidence="1">
        <name>Mg(2+)</name>
        <dbReference type="ChEBI" id="CHEBI:18420"/>
    </cofactor>
    <text evidence="1">Binds two Mg(2+) per subunit. The active form of the enzyme binds two Mg(2+) ions in its active site. The first Mg(2+) forms only one salt bridge with the protein.</text>
</comment>
<comment type="subunit">
    <text evidence="1">Homodimer.</text>
</comment>
<comment type="similarity">
    <text evidence="1">Belongs to the RNase T family.</text>
</comment>
<keyword id="KW-0269">Exonuclease</keyword>
<keyword id="KW-0378">Hydrolase</keyword>
<keyword id="KW-0460">Magnesium</keyword>
<keyword id="KW-0479">Metal-binding</keyword>
<keyword id="KW-0540">Nuclease</keyword>
<keyword id="KW-0819">tRNA processing</keyword>
<proteinExistence type="inferred from homology"/>